<sequence>MKVVKLADIIGTNRDVDGGNWRSQRIVVESDGMGYSLHDTQIKAGTETHLWYKYHLESVYVIEGEGEVETVKDGKVWPVKQYECYVLDKNDEHLLRAKTDMRMVCVFNPPVTGEEVHDEDGAYPLPEHMKPLNS</sequence>
<proteinExistence type="inferred from homology"/>
<protein>
    <recommendedName>
        <fullName evidence="1">L-ectoine synthase</fullName>
        <ecNumber evidence="1">4.2.1.108</ecNumber>
    </recommendedName>
    <alternativeName>
        <fullName evidence="1">N-acetyldiaminobutyrate dehydratase</fullName>
    </alternativeName>
</protein>
<organism>
    <name type="scientific">Shouchella clausii (strain KSM-K16)</name>
    <name type="common">Alkalihalobacillus clausii</name>
    <dbReference type="NCBI Taxonomy" id="66692"/>
    <lineage>
        <taxon>Bacteria</taxon>
        <taxon>Bacillati</taxon>
        <taxon>Bacillota</taxon>
        <taxon>Bacilli</taxon>
        <taxon>Bacillales</taxon>
        <taxon>Bacillaceae</taxon>
        <taxon>Shouchella</taxon>
    </lineage>
</organism>
<dbReference type="EC" id="4.2.1.108" evidence="1"/>
<dbReference type="EMBL" id="AP006627">
    <property type="protein sequence ID" value="BAD62878.1"/>
    <property type="molecule type" value="Genomic_DNA"/>
</dbReference>
<dbReference type="RefSeq" id="WP_011245197.1">
    <property type="nucleotide sequence ID" value="NC_006582.1"/>
</dbReference>
<dbReference type="SMR" id="Q5WL77"/>
<dbReference type="STRING" id="66692.ABC0336"/>
<dbReference type="KEGG" id="bcl:ABC0336"/>
<dbReference type="eggNOG" id="COG1917">
    <property type="taxonomic scope" value="Bacteria"/>
</dbReference>
<dbReference type="HOGENOM" id="CLU_154525_0_0_9"/>
<dbReference type="OrthoDB" id="4406415at2"/>
<dbReference type="UniPathway" id="UPA00067">
    <property type="reaction ID" value="UER00123"/>
</dbReference>
<dbReference type="Proteomes" id="UP000001168">
    <property type="component" value="Chromosome"/>
</dbReference>
<dbReference type="GO" id="GO:0033990">
    <property type="term" value="F:ectoine synthase activity"/>
    <property type="evidence" value="ECO:0007669"/>
    <property type="project" value="UniProtKB-EC"/>
</dbReference>
<dbReference type="GO" id="GO:0019491">
    <property type="term" value="P:ectoine biosynthetic process"/>
    <property type="evidence" value="ECO:0007669"/>
    <property type="project" value="UniProtKB-UniRule"/>
</dbReference>
<dbReference type="CDD" id="cd06978">
    <property type="entry name" value="cupin_EctC"/>
    <property type="match status" value="1"/>
</dbReference>
<dbReference type="Gene3D" id="2.60.120.10">
    <property type="entry name" value="Jelly Rolls"/>
    <property type="match status" value="1"/>
</dbReference>
<dbReference type="HAMAP" id="MF_01255">
    <property type="entry name" value="Ectoine_synth"/>
    <property type="match status" value="1"/>
</dbReference>
<dbReference type="InterPro" id="IPR010462">
    <property type="entry name" value="Ectoine_synth"/>
</dbReference>
<dbReference type="InterPro" id="IPR014710">
    <property type="entry name" value="RmlC-like_jellyroll"/>
</dbReference>
<dbReference type="InterPro" id="IPR011051">
    <property type="entry name" value="RmlC_Cupin_sf"/>
</dbReference>
<dbReference type="NCBIfam" id="NF009806">
    <property type="entry name" value="PRK13290.1"/>
    <property type="match status" value="1"/>
</dbReference>
<dbReference type="PANTHER" id="PTHR39289">
    <property type="match status" value="1"/>
</dbReference>
<dbReference type="PANTHER" id="PTHR39289:SF1">
    <property type="entry name" value="L-ECTOINE SYNTHASE"/>
    <property type="match status" value="1"/>
</dbReference>
<dbReference type="Pfam" id="PF06339">
    <property type="entry name" value="Ectoine_synth"/>
    <property type="match status" value="1"/>
</dbReference>
<dbReference type="SUPFAM" id="SSF51182">
    <property type="entry name" value="RmlC-like cupins"/>
    <property type="match status" value="1"/>
</dbReference>
<name>ECTC_SHOC1</name>
<gene>
    <name evidence="1" type="primary">ectC</name>
    <name type="ordered locus">ABC0336</name>
</gene>
<feature type="chain" id="PRO_0000220147" description="L-ectoine synthase">
    <location>
        <begin position="1"/>
        <end position="134"/>
    </location>
</feature>
<comment type="function">
    <text evidence="1">Catalyzes the circularization of gamma-N-acetyl-alpha,gamma-diaminobutyric acid (ADABA) to ectoine (1,4,5,6-tetrahydro-2-methyl-4-pyrimidine carboxylic acid), which is an excellent osmoprotectant.</text>
</comment>
<comment type="catalytic activity">
    <reaction evidence="1">
        <text>(2S)-4-acetamido-2-aminobutanoate = L-ectoine + H2O</text>
        <dbReference type="Rhea" id="RHEA:17281"/>
        <dbReference type="ChEBI" id="CHEBI:15377"/>
        <dbReference type="ChEBI" id="CHEBI:58515"/>
        <dbReference type="ChEBI" id="CHEBI:58929"/>
        <dbReference type="EC" id="4.2.1.108"/>
    </reaction>
</comment>
<comment type="pathway">
    <text evidence="1">Amine and polyamine biosynthesis; ectoine biosynthesis; L-ectoine from L-aspartate 4-semialdehyde: step 3/3.</text>
</comment>
<comment type="similarity">
    <text evidence="1">Belongs to the ectoine synthase family.</text>
</comment>
<reference key="1">
    <citation type="submission" date="2003-10" db="EMBL/GenBank/DDBJ databases">
        <title>The complete genome sequence of the alkaliphilic Bacillus clausii KSM-K16.</title>
        <authorList>
            <person name="Takaki Y."/>
            <person name="Kageyama Y."/>
            <person name="Shimamura S."/>
            <person name="Suzuki H."/>
            <person name="Nishi S."/>
            <person name="Hatada Y."/>
            <person name="Kawai S."/>
            <person name="Ito S."/>
            <person name="Horikoshi K."/>
        </authorList>
    </citation>
    <scope>NUCLEOTIDE SEQUENCE [LARGE SCALE GENOMIC DNA]</scope>
    <source>
        <strain>KSM-K16</strain>
    </source>
</reference>
<evidence type="ECO:0000255" key="1">
    <source>
        <dbReference type="HAMAP-Rule" id="MF_01255"/>
    </source>
</evidence>
<accession>Q5WL77</accession>
<keyword id="KW-0456">Lyase</keyword>
<keyword id="KW-1185">Reference proteome</keyword>